<organism>
    <name type="scientific">Bacillus cereus (strain B4264)</name>
    <dbReference type="NCBI Taxonomy" id="405532"/>
    <lineage>
        <taxon>Bacteria</taxon>
        <taxon>Bacillati</taxon>
        <taxon>Bacillota</taxon>
        <taxon>Bacilli</taxon>
        <taxon>Bacillales</taxon>
        <taxon>Bacillaceae</taxon>
        <taxon>Bacillus</taxon>
        <taxon>Bacillus cereus group</taxon>
    </lineage>
</organism>
<dbReference type="EC" id="3.4.19.3" evidence="1"/>
<dbReference type="EMBL" id="CP001176">
    <property type="protein sequence ID" value="ACK63194.1"/>
    <property type="molecule type" value="Genomic_DNA"/>
</dbReference>
<dbReference type="RefSeq" id="WP_000859708.1">
    <property type="nucleotide sequence ID" value="NZ_VEHB01000001.1"/>
</dbReference>
<dbReference type="SMR" id="B7H8H3"/>
<dbReference type="MEROPS" id="C15.001"/>
<dbReference type="KEGG" id="bcb:BCB4264_A3083"/>
<dbReference type="HOGENOM" id="CLU_043960_4_0_9"/>
<dbReference type="Proteomes" id="UP000007096">
    <property type="component" value="Chromosome"/>
</dbReference>
<dbReference type="GO" id="GO:0005829">
    <property type="term" value="C:cytosol"/>
    <property type="evidence" value="ECO:0007669"/>
    <property type="project" value="InterPro"/>
</dbReference>
<dbReference type="GO" id="GO:0016920">
    <property type="term" value="F:pyroglutamyl-peptidase activity"/>
    <property type="evidence" value="ECO:0007669"/>
    <property type="project" value="UniProtKB-UniRule"/>
</dbReference>
<dbReference type="GO" id="GO:0006508">
    <property type="term" value="P:proteolysis"/>
    <property type="evidence" value="ECO:0007669"/>
    <property type="project" value="UniProtKB-KW"/>
</dbReference>
<dbReference type="CDD" id="cd00501">
    <property type="entry name" value="Peptidase_C15"/>
    <property type="match status" value="1"/>
</dbReference>
<dbReference type="FunFam" id="3.40.630.20:FF:000001">
    <property type="entry name" value="Pyrrolidone-carboxylate peptidase"/>
    <property type="match status" value="1"/>
</dbReference>
<dbReference type="Gene3D" id="3.40.630.20">
    <property type="entry name" value="Peptidase C15, pyroglutamyl peptidase I-like"/>
    <property type="match status" value="1"/>
</dbReference>
<dbReference type="HAMAP" id="MF_00417">
    <property type="entry name" value="Pyrrolid_peptidase"/>
    <property type="match status" value="1"/>
</dbReference>
<dbReference type="InterPro" id="IPR000816">
    <property type="entry name" value="Peptidase_C15"/>
</dbReference>
<dbReference type="InterPro" id="IPR016125">
    <property type="entry name" value="Peptidase_C15-like"/>
</dbReference>
<dbReference type="InterPro" id="IPR036440">
    <property type="entry name" value="Peptidase_C15-like_sf"/>
</dbReference>
<dbReference type="InterPro" id="IPR029762">
    <property type="entry name" value="PGP-I_bact-type"/>
</dbReference>
<dbReference type="InterPro" id="IPR033694">
    <property type="entry name" value="PGPEP1_Cys_AS"/>
</dbReference>
<dbReference type="InterPro" id="IPR033693">
    <property type="entry name" value="PGPEP1_Glu_AS"/>
</dbReference>
<dbReference type="NCBIfam" id="NF009676">
    <property type="entry name" value="PRK13197.1"/>
    <property type="match status" value="1"/>
</dbReference>
<dbReference type="NCBIfam" id="TIGR00504">
    <property type="entry name" value="pyro_pdase"/>
    <property type="match status" value="1"/>
</dbReference>
<dbReference type="PANTHER" id="PTHR23402">
    <property type="entry name" value="PROTEASE FAMILY C15 PYROGLUTAMYL-PEPTIDASE I-RELATED"/>
    <property type="match status" value="1"/>
</dbReference>
<dbReference type="PANTHER" id="PTHR23402:SF1">
    <property type="entry name" value="PYROGLUTAMYL-PEPTIDASE I"/>
    <property type="match status" value="1"/>
</dbReference>
<dbReference type="Pfam" id="PF01470">
    <property type="entry name" value="Peptidase_C15"/>
    <property type="match status" value="1"/>
</dbReference>
<dbReference type="PIRSF" id="PIRSF015592">
    <property type="entry name" value="Prld-crbxl_pptds"/>
    <property type="match status" value="1"/>
</dbReference>
<dbReference type="PRINTS" id="PR00706">
    <property type="entry name" value="PYROGLUPTASE"/>
</dbReference>
<dbReference type="SUPFAM" id="SSF53182">
    <property type="entry name" value="Pyrrolidone carboxyl peptidase (pyroglutamate aminopeptidase)"/>
    <property type="match status" value="1"/>
</dbReference>
<dbReference type="PROSITE" id="PS01334">
    <property type="entry name" value="PYRASE_CYS"/>
    <property type="match status" value="1"/>
</dbReference>
<dbReference type="PROSITE" id="PS01333">
    <property type="entry name" value="PYRASE_GLU"/>
    <property type="match status" value="1"/>
</dbReference>
<keyword id="KW-0963">Cytoplasm</keyword>
<keyword id="KW-0378">Hydrolase</keyword>
<keyword id="KW-0645">Protease</keyword>
<keyword id="KW-0788">Thiol protease</keyword>
<evidence type="ECO:0000255" key="1">
    <source>
        <dbReference type="HAMAP-Rule" id="MF_00417"/>
    </source>
</evidence>
<gene>
    <name evidence="1" type="primary">pcp</name>
    <name type="ordered locus">BCB4264_A3083</name>
</gene>
<feature type="chain" id="PRO_1000123988" description="Pyrrolidone-carboxylate peptidase">
    <location>
        <begin position="1"/>
        <end position="215"/>
    </location>
</feature>
<feature type="active site" evidence="1">
    <location>
        <position position="80"/>
    </location>
</feature>
<feature type="active site" evidence="1">
    <location>
        <position position="143"/>
    </location>
</feature>
<feature type="active site" evidence="1">
    <location>
        <position position="167"/>
    </location>
</feature>
<reference key="1">
    <citation type="submission" date="2008-10" db="EMBL/GenBank/DDBJ databases">
        <title>Genome sequence of Bacillus cereus B4264.</title>
        <authorList>
            <person name="Dodson R.J."/>
            <person name="Durkin A.S."/>
            <person name="Rosovitz M.J."/>
            <person name="Rasko D.A."/>
            <person name="Hoffmaster A."/>
            <person name="Ravel J."/>
            <person name="Sutton G."/>
        </authorList>
    </citation>
    <scope>NUCLEOTIDE SEQUENCE [LARGE SCALE GENOMIC DNA]</scope>
    <source>
        <strain>B4264</strain>
    </source>
</reference>
<comment type="function">
    <text evidence="1">Removes 5-oxoproline from various penultimate amino acid residues except L-proline.</text>
</comment>
<comment type="catalytic activity">
    <reaction evidence="1">
        <text>Release of an N-terminal pyroglutamyl group from a polypeptide, the second amino acid generally not being Pro.</text>
        <dbReference type="EC" id="3.4.19.3"/>
    </reaction>
</comment>
<comment type="subunit">
    <text evidence="1">Homotetramer.</text>
</comment>
<comment type="subcellular location">
    <subcellularLocation>
        <location evidence="1">Cytoplasm</location>
    </subcellularLocation>
</comment>
<comment type="similarity">
    <text evidence="1">Belongs to the peptidase C15 family.</text>
</comment>
<sequence>MKTVLLTGFDPFGGENINPAWEVAKGLHEKTIGEYKIISKQVPTVFHKSISVLKEYIEELAPEIIICIGQAGGRPDITIERIAINIDDARIADNEGNQPVDVPVVEEGAIAYWSTLPMKAIVKKLREEGIPSSVSQTAGTFVCNHLFYGLMHELEKHDKKIKGGFIHIPFLPEQASNYPGQPSMSLSTIRKGIELAIEVTTTVKVDIVEVGGATH</sequence>
<protein>
    <recommendedName>
        <fullName evidence="1">Pyrrolidone-carboxylate peptidase</fullName>
        <ecNumber evidence="1">3.4.19.3</ecNumber>
    </recommendedName>
    <alternativeName>
        <fullName evidence="1">5-oxoprolyl-peptidase</fullName>
    </alternativeName>
    <alternativeName>
        <fullName evidence="1">Pyroglutamyl-peptidase I</fullName>
        <shortName evidence="1">PGP-I</shortName>
        <shortName evidence="1">Pyrase</shortName>
    </alternativeName>
</protein>
<name>PCP_BACC4</name>
<proteinExistence type="inferred from homology"/>
<accession>B7H8H3</accession>